<feature type="signal peptide" evidence="2">
    <location>
        <begin position="1"/>
        <end position="19"/>
    </location>
</feature>
<feature type="propeptide" id="PRO_0000412427" evidence="1">
    <location>
        <begin position="20"/>
        <end position="88"/>
    </location>
</feature>
<feature type="chain" id="PRO_0000412428" description="Leucine aminopeptidase 1">
    <location>
        <begin position="89"/>
        <end position="388"/>
    </location>
</feature>
<feature type="binding site" evidence="1">
    <location>
        <position position="188"/>
    </location>
    <ligand>
        <name>Zn(2+)</name>
        <dbReference type="ChEBI" id="CHEBI:29105"/>
        <label>1</label>
    </ligand>
</feature>
<feature type="binding site" evidence="1">
    <location>
        <position position="207"/>
    </location>
    <ligand>
        <name>Zn(2+)</name>
        <dbReference type="ChEBI" id="CHEBI:29105"/>
        <label>1</label>
    </ligand>
</feature>
<feature type="binding site" evidence="1">
    <location>
        <position position="207"/>
    </location>
    <ligand>
        <name>Zn(2+)</name>
        <dbReference type="ChEBI" id="CHEBI:29105"/>
        <label>2</label>
        <note>catalytic</note>
    </ligand>
</feature>
<feature type="binding site" evidence="1">
    <location>
        <position position="246"/>
    </location>
    <ligand>
        <name>Zn(2+)</name>
        <dbReference type="ChEBI" id="CHEBI:29105"/>
        <label>2</label>
        <note>catalytic</note>
    </ligand>
</feature>
<feature type="binding site" evidence="1">
    <location>
        <position position="273"/>
    </location>
    <ligand>
        <name>Zn(2+)</name>
        <dbReference type="ChEBI" id="CHEBI:29105"/>
        <label>1</label>
    </ligand>
</feature>
<feature type="binding site" evidence="1">
    <location>
        <position position="355"/>
    </location>
    <ligand>
        <name>Zn(2+)</name>
        <dbReference type="ChEBI" id="CHEBI:29105"/>
        <label>2</label>
        <note>catalytic</note>
    </ligand>
</feature>
<feature type="glycosylation site" description="N-linked (GlcNAc...) asparagine" evidence="2">
    <location>
        <position position="106"/>
    </location>
</feature>
<feature type="glycosylation site" description="N-linked (GlcNAc...) asparagine" evidence="2">
    <location>
        <position position="180"/>
    </location>
</feature>
<feature type="glycosylation site" description="N-linked (GlcNAc...) asparagine" evidence="2">
    <location>
        <position position="232"/>
    </location>
</feature>
<feature type="disulfide bond" evidence="1">
    <location>
        <begin position="322"/>
        <end position="326"/>
    </location>
</feature>
<sequence length="388" mass="43128">MKVLTAIALSAIAFTGAVAAVITQEAFLNNPRIHHDQEKYLIELAPYRTRWVTEEEKWALKLDGVNFIDITEEHNTGFYPTLHSASYVKYPPKMQYAEEVAALNKNLSKENMKANLERFTSFHTRYYKSQTGIRSATWLFDQVQRVVSESGAAEYGATVERFSHPWGQFSIIARIPGRTNKTVVLGAHQDSINLFLPSILAAPGADDDGSGTVTILEALRGLLQSDAIAKGNASNTVEFHWYSAEEGGMLGSQAIFSNYKRNRREIKAMLQQDMTGYVQGALNAGVEEAIGIMVDYVDQGLTQFLKDVVTAYCSVGYLETKCGYACSDHTSASKYGYPAAMATEAEMENTNKKIHTTDDKIKYLSFDHMLEHAKLSLGFAFELAFAPF</sequence>
<proteinExistence type="inferred from homology"/>
<dbReference type="EC" id="3.4.11.-"/>
<dbReference type="EMBL" id="DS499603">
    <property type="protein sequence ID" value="EDP47280.1"/>
    <property type="status" value="ALT_SEQ"/>
    <property type="molecule type" value="Genomic_DNA"/>
</dbReference>
<dbReference type="SMR" id="B0YED6"/>
<dbReference type="MEROPS" id="M28.022"/>
<dbReference type="GlyCosmos" id="B0YED6">
    <property type="glycosylation" value="3 sites, No reported glycans"/>
</dbReference>
<dbReference type="VEuPathDB" id="FungiDB:AFUB_098810"/>
<dbReference type="OrthoDB" id="48123at5052"/>
<dbReference type="Proteomes" id="UP000001699">
    <property type="component" value="Unassembled WGS sequence"/>
</dbReference>
<dbReference type="GO" id="GO:0005576">
    <property type="term" value="C:extracellular region"/>
    <property type="evidence" value="ECO:0007669"/>
    <property type="project" value="UniProtKB-SubCell"/>
</dbReference>
<dbReference type="GO" id="GO:0004177">
    <property type="term" value="F:aminopeptidase activity"/>
    <property type="evidence" value="ECO:0007669"/>
    <property type="project" value="UniProtKB-KW"/>
</dbReference>
<dbReference type="GO" id="GO:0046872">
    <property type="term" value="F:metal ion binding"/>
    <property type="evidence" value="ECO:0007669"/>
    <property type="project" value="UniProtKB-KW"/>
</dbReference>
<dbReference type="GO" id="GO:0008235">
    <property type="term" value="F:metalloexopeptidase activity"/>
    <property type="evidence" value="ECO:0007669"/>
    <property type="project" value="InterPro"/>
</dbReference>
<dbReference type="GO" id="GO:0006508">
    <property type="term" value="P:proteolysis"/>
    <property type="evidence" value="ECO:0007669"/>
    <property type="project" value="UniProtKB-KW"/>
</dbReference>
<dbReference type="CDD" id="cd03879">
    <property type="entry name" value="M28_AAP"/>
    <property type="match status" value="1"/>
</dbReference>
<dbReference type="FunFam" id="3.40.630.10:FF:000042">
    <property type="entry name" value="Peptide hydrolase"/>
    <property type="match status" value="1"/>
</dbReference>
<dbReference type="Gene3D" id="3.40.630.10">
    <property type="entry name" value="Zn peptidases"/>
    <property type="match status" value="1"/>
</dbReference>
<dbReference type="InterPro" id="IPR045175">
    <property type="entry name" value="M28_fam"/>
</dbReference>
<dbReference type="InterPro" id="IPR007484">
    <property type="entry name" value="Peptidase_M28"/>
</dbReference>
<dbReference type="PANTHER" id="PTHR12147:SF56">
    <property type="entry name" value="AMINOPEPTIDASE YDR415C-RELATED"/>
    <property type="match status" value="1"/>
</dbReference>
<dbReference type="PANTHER" id="PTHR12147">
    <property type="entry name" value="METALLOPEPTIDASE M28 FAMILY MEMBER"/>
    <property type="match status" value="1"/>
</dbReference>
<dbReference type="Pfam" id="PF04389">
    <property type="entry name" value="Peptidase_M28"/>
    <property type="match status" value="1"/>
</dbReference>
<dbReference type="SUPFAM" id="SSF53187">
    <property type="entry name" value="Zn-dependent exopeptidases"/>
    <property type="match status" value="1"/>
</dbReference>
<name>LAP1_ASPFC</name>
<keyword id="KW-0031">Aminopeptidase</keyword>
<keyword id="KW-1015">Disulfide bond</keyword>
<keyword id="KW-0325">Glycoprotein</keyword>
<keyword id="KW-0378">Hydrolase</keyword>
<keyword id="KW-0479">Metal-binding</keyword>
<keyword id="KW-0645">Protease</keyword>
<keyword id="KW-0964">Secreted</keyword>
<keyword id="KW-0732">Signal</keyword>
<keyword id="KW-0843">Virulence</keyword>
<keyword id="KW-0862">Zinc</keyword>
<keyword id="KW-0865">Zymogen</keyword>
<comment type="function">
    <text evidence="1">Extracellular aminopeptidase that allows assimilation of proteinaceous substrates and which contributes to pathogenicity.</text>
</comment>
<comment type="cofactor">
    <cofactor evidence="1">
        <name>Zn(2+)</name>
        <dbReference type="ChEBI" id="CHEBI:29105"/>
    </cofactor>
    <text evidence="1">Binds 2 Zn(2+) ions per subunit.</text>
</comment>
<comment type="subunit">
    <text evidence="1">Monomer.</text>
</comment>
<comment type="subcellular location">
    <subcellularLocation>
        <location evidence="1">Secreted</location>
    </subcellularLocation>
</comment>
<comment type="similarity">
    <text evidence="3">Belongs to the peptidase M28 family. M28E subfamily.</text>
</comment>
<comment type="sequence caution" evidence="3">
    <conflict type="erroneous gene model prediction">
        <sequence resource="EMBL-CDS" id="EDP47280"/>
    </conflict>
</comment>
<reference key="1">
    <citation type="journal article" date="2008" name="PLoS Genet.">
        <title>Genomic islands in the pathogenic filamentous fungus Aspergillus fumigatus.</title>
        <authorList>
            <person name="Fedorova N.D."/>
            <person name="Khaldi N."/>
            <person name="Joardar V.S."/>
            <person name="Maiti R."/>
            <person name="Amedeo P."/>
            <person name="Anderson M.J."/>
            <person name="Crabtree J."/>
            <person name="Silva J.C."/>
            <person name="Badger J.H."/>
            <person name="Albarraq A."/>
            <person name="Angiuoli S."/>
            <person name="Bussey H."/>
            <person name="Bowyer P."/>
            <person name="Cotty P.J."/>
            <person name="Dyer P.S."/>
            <person name="Egan A."/>
            <person name="Galens K."/>
            <person name="Fraser-Liggett C.M."/>
            <person name="Haas B.J."/>
            <person name="Inman J.M."/>
            <person name="Kent R."/>
            <person name="Lemieux S."/>
            <person name="Malavazi I."/>
            <person name="Orvis J."/>
            <person name="Roemer T."/>
            <person name="Ronning C.M."/>
            <person name="Sundaram J.P."/>
            <person name="Sutton G."/>
            <person name="Turner G."/>
            <person name="Venter J.C."/>
            <person name="White O.R."/>
            <person name="Whitty B.R."/>
            <person name="Youngman P."/>
            <person name="Wolfe K.H."/>
            <person name="Goldman G.H."/>
            <person name="Wortman J.R."/>
            <person name="Jiang B."/>
            <person name="Denning D.W."/>
            <person name="Nierman W.C."/>
        </authorList>
    </citation>
    <scope>NUCLEOTIDE SEQUENCE [LARGE SCALE GENOMIC DNA]</scope>
    <source>
        <strain>CBS 144.89 / FGSC A1163 / CEA10</strain>
    </source>
</reference>
<protein>
    <recommendedName>
        <fullName>Leucine aminopeptidase 1</fullName>
        <ecNumber>3.4.11.-</ecNumber>
    </recommendedName>
    <alternativeName>
        <fullName>Leucyl aminopeptidase 1</fullName>
        <shortName>LAP1</shortName>
    </alternativeName>
</protein>
<evidence type="ECO:0000250" key="1"/>
<evidence type="ECO:0000255" key="2"/>
<evidence type="ECO:0000305" key="3"/>
<organism>
    <name type="scientific">Aspergillus fumigatus (strain CBS 144.89 / FGSC A1163 / CEA10)</name>
    <name type="common">Neosartorya fumigata</name>
    <dbReference type="NCBI Taxonomy" id="451804"/>
    <lineage>
        <taxon>Eukaryota</taxon>
        <taxon>Fungi</taxon>
        <taxon>Dikarya</taxon>
        <taxon>Ascomycota</taxon>
        <taxon>Pezizomycotina</taxon>
        <taxon>Eurotiomycetes</taxon>
        <taxon>Eurotiomycetidae</taxon>
        <taxon>Eurotiales</taxon>
        <taxon>Aspergillaceae</taxon>
        <taxon>Aspergillus</taxon>
        <taxon>Aspergillus subgen. Fumigati</taxon>
    </lineage>
</organism>
<accession>B0YED6</accession>
<gene>
    <name type="primary">lap1</name>
    <name type="ORF">AFUB_098810</name>
</gene>